<keyword id="KW-0067">ATP-binding</keyword>
<keyword id="KW-0963">Cytoplasm</keyword>
<keyword id="KW-1015">Disulfide bond</keyword>
<keyword id="KW-0547">Nucleotide-binding</keyword>
<keyword id="KW-0694">RNA-binding</keyword>
<keyword id="KW-0808">Transferase</keyword>
<keyword id="KW-0819">tRNA processing</keyword>
<keyword id="KW-0820">tRNA-binding</keyword>
<proteinExistence type="inferred from homology"/>
<reference key="1">
    <citation type="journal article" date="2010" name="Genome Biol. Evol.">
        <title>Continuing evolution of Burkholderia mallei through genome reduction and large-scale rearrangements.</title>
        <authorList>
            <person name="Losada L."/>
            <person name="Ronning C.M."/>
            <person name="DeShazer D."/>
            <person name="Woods D."/>
            <person name="Fedorova N."/>
            <person name="Kim H.S."/>
            <person name="Shabalina S.A."/>
            <person name="Pearson T.R."/>
            <person name="Brinkac L."/>
            <person name="Tan P."/>
            <person name="Nandi T."/>
            <person name="Crabtree J."/>
            <person name="Badger J."/>
            <person name="Beckstrom-Sternberg S."/>
            <person name="Saqib M."/>
            <person name="Schutzer S.E."/>
            <person name="Keim P."/>
            <person name="Nierman W.C."/>
        </authorList>
    </citation>
    <scope>NUCLEOTIDE SEQUENCE [LARGE SCALE GENOMIC DNA]</scope>
    <source>
        <strain>NCTC 10247</strain>
    </source>
</reference>
<sequence>MTKRRVVVGMSGGVDSSVTAWLLKEQGYDVVGLFMKNWEDDDDGEYCSTRQDWIDVVSVADLIGIDVEAVNFAAEYKDRVFAEFLREYSAGRTPNPDVLCNAEIKFKAFLDHAMSLGAQTIATGHYARVRERDGRFELLKAFDHTKDQSYFLHRLNQAQLSKTMFPLGEIPKTRVREIAAQIGLPNAKKKDSTGICFIGERPFRDFLNRYLPTKPGPMKTPDGKTVGEHIGLAFYTFGQRKGIGLGGSKDGSGEPWFVAVKDIASNTLYVVQGHDHPWLRSRELVAGNVSWVAGEPPADGARCGAKTRYRQADAPCAFGRAAQAGDERFSLVFDEPQWAVTPGQSAVLYDGDVCLGGGIIESAATGRAGTAPAGRAPALVEAR</sequence>
<organism>
    <name type="scientific">Burkholderia mallei (strain NCTC 10247)</name>
    <dbReference type="NCBI Taxonomy" id="320389"/>
    <lineage>
        <taxon>Bacteria</taxon>
        <taxon>Pseudomonadati</taxon>
        <taxon>Pseudomonadota</taxon>
        <taxon>Betaproteobacteria</taxon>
        <taxon>Burkholderiales</taxon>
        <taxon>Burkholderiaceae</taxon>
        <taxon>Burkholderia</taxon>
        <taxon>pseudomallei group</taxon>
    </lineage>
</organism>
<comment type="function">
    <text evidence="1">Catalyzes the 2-thiolation of uridine at the wobble position (U34) of tRNA, leading to the formation of s(2)U34.</text>
</comment>
<comment type="catalytic activity">
    <reaction evidence="1">
        <text>S-sulfanyl-L-cysteinyl-[protein] + uridine(34) in tRNA + AH2 + ATP = 2-thiouridine(34) in tRNA + L-cysteinyl-[protein] + A + AMP + diphosphate + H(+)</text>
        <dbReference type="Rhea" id="RHEA:47032"/>
        <dbReference type="Rhea" id="RHEA-COMP:10131"/>
        <dbReference type="Rhea" id="RHEA-COMP:11726"/>
        <dbReference type="Rhea" id="RHEA-COMP:11727"/>
        <dbReference type="Rhea" id="RHEA-COMP:11728"/>
        <dbReference type="ChEBI" id="CHEBI:13193"/>
        <dbReference type="ChEBI" id="CHEBI:15378"/>
        <dbReference type="ChEBI" id="CHEBI:17499"/>
        <dbReference type="ChEBI" id="CHEBI:29950"/>
        <dbReference type="ChEBI" id="CHEBI:30616"/>
        <dbReference type="ChEBI" id="CHEBI:33019"/>
        <dbReference type="ChEBI" id="CHEBI:61963"/>
        <dbReference type="ChEBI" id="CHEBI:65315"/>
        <dbReference type="ChEBI" id="CHEBI:87170"/>
        <dbReference type="ChEBI" id="CHEBI:456215"/>
        <dbReference type="EC" id="2.8.1.13"/>
    </reaction>
</comment>
<comment type="subcellular location">
    <subcellularLocation>
        <location evidence="1">Cytoplasm</location>
    </subcellularLocation>
</comment>
<comment type="similarity">
    <text evidence="1">Belongs to the MnmA/TRMU family.</text>
</comment>
<gene>
    <name evidence="1" type="primary">mnmA</name>
    <name type="ordered locus">BMA10247_2544</name>
</gene>
<accession>A3MP84</accession>
<protein>
    <recommendedName>
        <fullName evidence="1">tRNA-specific 2-thiouridylase MnmA</fullName>
        <ecNumber evidence="1">2.8.1.13</ecNumber>
    </recommendedName>
</protein>
<feature type="chain" id="PRO_0000349555" description="tRNA-specific 2-thiouridylase MnmA">
    <location>
        <begin position="1"/>
        <end position="383"/>
    </location>
</feature>
<feature type="region of interest" description="Interaction with target base in tRNA" evidence="1">
    <location>
        <begin position="95"/>
        <end position="97"/>
    </location>
</feature>
<feature type="region of interest" description="Interaction with tRNA" evidence="1">
    <location>
        <begin position="146"/>
        <end position="148"/>
    </location>
</feature>
<feature type="region of interest" description="Interaction with tRNA" evidence="1">
    <location>
        <begin position="308"/>
        <end position="309"/>
    </location>
</feature>
<feature type="active site" description="Nucleophile" evidence="1">
    <location>
        <position position="100"/>
    </location>
</feature>
<feature type="active site" description="Cysteine persulfide intermediate" evidence="1">
    <location>
        <position position="196"/>
    </location>
</feature>
<feature type="binding site" evidence="1">
    <location>
        <begin position="9"/>
        <end position="16"/>
    </location>
    <ligand>
        <name>ATP</name>
        <dbReference type="ChEBI" id="CHEBI:30616"/>
    </ligand>
</feature>
<feature type="binding site" evidence="1">
    <location>
        <position position="35"/>
    </location>
    <ligand>
        <name>ATP</name>
        <dbReference type="ChEBI" id="CHEBI:30616"/>
    </ligand>
</feature>
<feature type="binding site" evidence="1">
    <location>
        <position position="124"/>
    </location>
    <ligand>
        <name>ATP</name>
        <dbReference type="ChEBI" id="CHEBI:30616"/>
    </ligand>
</feature>
<feature type="site" description="Interaction with tRNA" evidence="1">
    <location>
        <position position="125"/>
    </location>
</feature>
<feature type="site" description="Interaction with tRNA" evidence="1">
    <location>
        <position position="344"/>
    </location>
</feature>
<feature type="disulfide bond" description="Alternate" evidence="1">
    <location>
        <begin position="100"/>
        <end position="196"/>
    </location>
</feature>
<dbReference type="EC" id="2.8.1.13" evidence="1"/>
<dbReference type="EMBL" id="CP000548">
    <property type="protein sequence ID" value="ABO03999.1"/>
    <property type="molecule type" value="Genomic_DNA"/>
</dbReference>
<dbReference type="RefSeq" id="WP_004194365.1">
    <property type="nucleotide sequence ID" value="NZ_CP007802.1"/>
</dbReference>
<dbReference type="SMR" id="A3MP84"/>
<dbReference type="GeneID" id="92980058"/>
<dbReference type="KEGG" id="bmaz:BM44_762"/>
<dbReference type="KEGG" id="bmn:BMA10247_2544"/>
<dbReference type="PATRIC" id="fig|320389.8.peg.846"/>
<dbReference type="GO" id="GO:0005737">
    <property type="term" value="C:cytoplasm"/>
    <property type="evidence" value="ECO:0007669"/>
    <property type="project" value="UniProtKB-SubCell"/>
</dbReference>
<dbReference type="GO" id="GO:0005524">
    <property type="term" value="F:ATP binding"/>
    <property type="evidence" value="ECO:0007669"/>
    <property type="project" value="UniProtKB-KW"/>
</dbReference>
<dbReference type="GO" id="GO:0000049">
    <property type="term" value="F:tRNA binding"/>
    <property type="evidence" value="ECO:0007669"/>
    <property type="project" value="UniProtKB-KW"/>
</dbReference>
<dbReference type="GO" id="GO:0103016">
    <property type="term" value="F:tRNA-uridine 2-sulfurtransferase activity"/>
    <property type="evidence" value="ECO:0007669"/>
    <property type="project" value="UniProtKB-EC"/>
</dbReference>
<dbReference type="GO" id="GO:0002143">
    <property type="term" value="P:tRNA wobble position uridine thiolation"/>
    <property type="evidence" value="ECO:0007669"/>
    <property type="project" value="TreeGrafter"/>
</dbReference>
<dbReference type="CDD" id="cd01998">
    <property type="entry name" value="MnmA_TRMU-like"/>
    <property type="match status" value="1"/>
</dbReference>
<dbReference type="FunFam" id="2.30.30.280:FF:000001">
    <property type="entry name" value="tRNA-specific 2-thiouridylase MnmA"/>
    <property type="match status" value="1"/>
</dbReference>
<dbReference type="FunFam" id="2.40.30.10:FF:000023">
    <property type="entry name" value="tRNA-specific 2-thiouridylase MnmA"/>
    <property type="match status" value="1"/>
</dbReference>
<dbReference type="FunFam" id="3.40.50.620:FF:000004">
    <property type="entry name" value="tRNA-specific 2-thiouridylase MnmA"/>
    <property type="match status" value="1"/>
</dbReference>
<dbReference type="Gene3D" id="2.30.30.280">
    <property type="entry name" value="Adenine nucleotide alpha hydrolases-like domains"/>
    <property type="match status" value="1"/>
</dbReference>
<dbReference type="Gene3D" id="3.40.50.620">
    <property type="entry name" value="HUPs"/>
    <property type="match status" value="1"/>
</dbReference>
<dbReference type="Gene3D" id="2.40.30.10">
    <property type="entry name" value="Translation factors"/>
    <property type="match status" value="1"/>
</dbReference>
<dbReference type="HAMAP" id="MF_00144">
    <property type="entry name" value="tRNA_thiouridyl_MnmA"/>
    <property type="match status" value="1"/>
</dbReference>
<dbReference type="InterPro" id="IPR004506">
    <property type="entry name" value="MnmA-like"/>
</dbReference>
<dbReference type="InterPro" id="IPR046885">
    <property type="entry name" value="MnmA-like_C"/>
</dbReference>
<dbReference type="InterPro" id="IPR046884">
    <property type="entry name" value="MnmA-like_central"/>
</dbReference>
<dbReference type="InterPro" id="IPR023382">
    <property type="entry name" value="MnmA-like_central_sf"/>
</dbReference>
<dbReference type="InterPro" id="IPR014729">
    <property type="entry name" value="Rossmann-like_a/b/a_fold"/>
</dbReference>
<dbReference type="NCBIfam" id="NF001138">
    <property type="entry name" value="PRK00143.1"/>
    <property type="match status" value="1"/>
</dbReference>
<dbReference type="NCBIfam" id="TIGR00420">
    <property type="entry name" value="trmU"/>
    <property type="match status" value="1"/>
</dbReference>
<dbReference type="PANTHER" id="PTHR11933:SF5">
    <property type="entry name" value="MITOCHONDRIAL TRNA-SPECIFIC 2-THIOURIDYLASE 1"/>
    <property type="match status" value="1"/>
</dbReference>
<dbReference type="PANTHER" id="PTHR11933">
    <property type="entry name" value="TRNA 5-METHYLAMINOMETHYL-2-THIOURIDYLATE -METHYLTRANSFERASE"/>
    <property type="match status" value="1"/>
</dbReference>
<dbReference type="Pfam" id="PF03054">
    <property type="entry name" value="tRNA_Me_trans"/>
    <property type="match status" value="1"/>
</dbReference>
<dbReference type="Pfam" id="PF20258">
    <property type="entry name" value="tRNA_Me_trans_C"/>
    <property type="match status" value="1"/>
</dbReference>
<dbReference type="Pfam" id="PF20259">
    <property type="entry name" value="tRNA_Me_trans_M"/>
    <property type="match status" value="1"/>
</dbReference>
<dbReference type="SUPFAM" id="SSF52402">
    <property type="entry name" value="Adenine nucleotide alpha hydrolases-like"/>
    <property type="match status" value="1"/>
</dbReference>
<name>MNMA_BURM7</name>
<evidence type="ECO:0000255" key="1">
    <source>
        <dbReference type="HAMAP-Rule" id="MF_00144"/>
    </source>
</evidence>